<protein>
    <recommendedName>
        <fullName evidence="1">Photosystem II reaction center protein I</fullName>
        <shortName evidence="1">PSII-I</shortName>
    </recommendedName>
    <alternativeName>
        <fullName evidence="1">PSII 4.8 kDa protein</fullName>
    </alternativeName>
</protein>
<accession>Q2PMS7</accession>
<dbReference type="EMBL" id="DQ317523">
    <property type="protein sequence ID" value="ABC25131.1"/>
    <property type="molecule type" value="Genomic_DNA"/>
</dbReference>
<dbReference type="RefSeq" id="YP_538771.1">
    <property type="nucleotide sequence ID" value="NC_007942.1"/>
</dbReference>
<dbReference type="SMR" id="Q2PMS7"/>
<dbReference type="FunCoup" id="Q2PMS7">
    <property type="interactions" value="77"/>
</dbReference>
<dbReference type="STRING" id="3847.Q2PMS7"/>
<dbReference type="PaxDb" id="3847-GLYMA11G17485.1"/>
<dbReference type="GeneID" id="3989302"/>
<dbReference type="KEGG" id="gmx:3989302"/>
<dbReference type="eggNOG" id="ENOG502SEUZ">
    <property type="taxonomic scope" value="Eukaryota"/>
</dbReference>
<dbReference type="HOGENOM" id="CLU_212150_0_0_1"/>
<dbReference type="InParanoid" id="Q2PMS7"/>
<dbReference type="OrthoDB" id="564007at2759"/>
<dbReference type="Proteomes" id="UP000008827">
    <property type="component" value="Chloroplast"/>
</dbReference>
<dbReference type="GO" id="GO:0009535">
    <property type="term" value="C:chloroplast thylakoid membrane"/>
    <property type="evidence" value="ECO:0007669"/>
    <property type="project" value="UniProtKB-SubCell"/>
</dbReference>
<dbReference type="GO" id="GO:0009539">
    <property type="term" value="C:photosystem II reaction center"/>
    <property type="evidence" value="ECO:0007669"/>
    <property type="project" value="InterPro"/>
</dbReference>
<dbReference type="GO" id="GO:0015979">
    <property type="term" value="P:photosynthesis"/>
    <property type="evidence" value="ECO:0007669"/>
    <property type="project" value="UniProtKB-UniRule"/>
</dbReference>
<dbReference type="HAMAP" id="MF_01316">
    <property type="entry name" value="PSII_PsbI"/>
    <property type="match status" value="1"/>
</dbReference>
<dbReference type="InterPro" id="IPR003686">
    <property type="entry name" value="PSII_PsbI"/>
</dbReference>
<dbReference type="InterPro" id="IPR037271">
    <property type="entry name" value="PSII_PsbI_sf"/>
</dbReference>
<dbReference type="NCBIfam" id="NF002735">
    <property type="entry name" value="PRK02655.1"/>
    <property type="match status" value="1"/>
</dbReference>
<dbReference type="PANTHER" id="PTHR35772">
    <property type="entry name" value="PHOTOSYSTEM II REACTION CENTER PROTEIN I"/>
    <property type="match status" value="1"/>
</dbReference>
<dbReference type="PANTHER" id="PTHR35772:SF1">
    <property type="entry name" value="PHOTOSYSTEM II REACTION CENTER PROTEIN I"/>
    <property type="match status" value="1"/>
</dbReference>
<dbReference type="Pfam" id="PF02532">
    <property type="entry name" value="PsbI"/>
    <property type="match status" value="1"/>
</dbReference>
<dbReference type="SUPFAM" id="SSF161041">
    <property type="entry name" value="Photosystem II reaction center protein I, PsbI"/>
    <property type="match status" value="1"/>
</dbReference>
<geneLocation type="chloroplast"/>
<organism>
    <name type="scientific">Glycine max</name>
    <name type="common">Soybean</name>
    <name type="synonym">Glycine hispida</name>
    <dbReference type="NCBI Taxonomy" id="3847"/>
    <lineage>
        <taxon>Eukaryota</taxon>
        <taxon>Viridiplantae</taxon>
        <taxon>Streptophyta</taxon>
        <taxon>Embryophyta</taxon>
        <taxon>Tracheophyta</taxon>
        <taxon>Spermatophyta</taxon>
        <taxon>Magnoliopsida</taxon>
        <taxon>eudicotyledons</taxon>
        <taxon>Gunneridae</taxon>
        <taxon>Pentapetalae</taxon>
        <taxon>rosids</taxon>
        <taxon>fabids</taxon>
        <taxon>Fabales</taxon>
        <taxon>Fabaceae</taxon>
        <taxon>Papilionoideae</taxon>
        <taxon>50 kb inversion clade</taxon>
        <taxon>NPAAA clade</taxon>
        <taxon>indigoferoid/millettioid clade</taxon>
        <taxon>Phaseoleae</taxon>
        <taxon>Glycine</taxon>
        <taxon>Glycine subgen. Soja</taxon>
    </lineage>
</organism>
<name>PSBI_SOYBN</name>
<proteinExistence type="inferred from homology"/>
<evidence type="ECO:0000255" key="1">
    <source>
        <dbReference type="HAMAP-Rule" id="MF_01316"/>
    </source>
</evidence>
<keyword id="KW-0150">Chloroplast</keyword>
<keyword id="KW-0472">Membrane</keyword>
<keyword id="KW-0602">Photosynthesis</keyword>
<keyword id="KW-0604">Photosystem II</keyword>
<keyword id="KW-0934">Plastid</keyword>
<keyword id="KW-0674">Reaction center</keyword>
<keyword id="KW-1185">Reference proteome</keyword>
<keyword id="KW-0793">Thylakoid</keyword>
<keyword id="KW-0812">Transmembrane</keyword>
<keyword id="KW-1133">Transmembrane helix</keyword>
<gene>
    <name evidence="1" type="primary">psbI</name>
</gene>
<sequence length="36" mass="4168">MLTLKLFVYTVVIFFVSLFIFGFLSNDPGRNPGREE</sequence>
<feature type="chain" id="PRO_0000275792" description="Photosystem II reaction center protein I">
    <location>
        <begin position="1"/>
        <end position="36"/>
    </location>
</feature>
<feature type="transmembrane region" description="Helical" evidence="1">
    <location>
        <begin position="4"/>
        <end position="24"/>
    </location>
</feature>
<comment type="function">
    <text evidence="1">One of the components of the core complex of photosystem II (PSII), required for its stability and/or assembly. PSII is a light-driven water:plastoquinone oxidoreductase that uses light energy to abstract electrons from H(2)O, generating O(2) and a proton gradient subsequently used for ATP formation. It consists of a core antenna complex that captures photons, and an electron transfer chain that converts photonic excitation into a charge separation.</text>
</comment>
<comment type="subunit">
    <text evidence="1">PSII is composed of 1 copy each of membrane proteins PsbA, PsbB, PsbC, PsbD, PsbE, PsbF, PsbH, PsbI, PsbJ, PsbK, PsbL, PsbM, PsbT, PsbX, PsbY, PsbZ, Psb30/Ycf12, at least 3 peripheral proteins of the oxygen-evolving complex and a large number of cofactors. It forms dimeric complexes.</text>
</comment>
<comment type="subcellular location">
    <subcellularLocation>
        <location evidence="1">Plastid</location>
        <location evidence="1">Chloroplast thylakoid membrane</location>
        <topology evidence="1">Single-pass membrane protein</topology>
    </subcellularLocation>
</comment>
<comment type="similarity">
    <text evidence="1">Belongs to the PsbI family.</text>
</comment>
<reference key="1">
    <citation type="journal article" date="2005" name="Plant Mol. Biol.">
        <title>Complete chloroplast genome sequence of Glycine max and comparative analyses with other legume genomes.</title>
        <authorList>
            <person name="Saski C."/>
            <person name="Lee S.-B."/>
            <person name="Daniell H."/>
            <person name="Wood T.C."/>
            <person name="Tomkins J."/>
            <person name="Kim H.-G."/>
            <person name="Jansen R.K."/>
        </authorList>
    </citation>
    <scope>NUCLEOTIDE SEQUENCE [LARGE SCALE GENOMIC DNA]</scope>
    <source>
        <strain>cv. PI 437654</strain>
    </source>
</reference>